<name>SPEF2_MOUSE</name>
<gene>
    <name type="primary">Spef2</name>
    <name type="synonym">Kpl2</name>
</gene>
<dbReference type="EMBL" id="HQ856050">
    <property type="protein sequence ID" value="AEA11026.1"/>
    <property type="molecule type" value="mRNA"/>
</dbReference>
<dbReference type="EMBL" id="AK041992">
    <property type="protein sequence ID" value="BAC31126.1"/>
    <property type="molecule type" value="mRNA"/>
</dbReference>
<dbReference type="EMBL" id="AC133586">
    <property type="status" value="NOT_ANNOTATED_CDS"/>
    <property type="molecule type" value="Genomic_DNA"/>
</dbReference>
<dbReference type="EMBL" id="AC133959">
    <property type="status" value="NOT_ANNOTATED_CDS"/>
    <property type="molecule type" value="Genomic_DNA"/>
</dbReference>
<dbReference type="EMBL" id="BC132098">
    <property type="protein sequence ID" value="AAI32099.1"/>
    <property type="molecule type" value="mRNA"/>
</dbReference>
<dbReference type="EMBL" id="BC132288">
    <property type="protein sequence ID" value="AAI32289.1"/>
    <property type="molecule type" value="mRNA"/>
</dbReference>
<dbReference type="CCDS" id="CCDS37041.1">
    <molecule id="Q8C9J3-2"/>
</dbReference>
<dbReference type="CCDS" id="CCDS84163.1">
    <molecule id="Q8C9J3-3"/>
</dbReference>
<dbReference type="RefSeq" id="NP_001291971.1">
    <molecule id="Q8C9J3-4"/>
    <property type="nucleotide sequence ID" value="NM_001305042.1"/>
</dbReference>
<dbReference type="RefSeq" id="NP_001291973.1">
    <molecule id="Q8C9J3-3"/>
    <property type="nucleotide sequence ID" value="NM_001305044.1"/>
</dbReference>
<dbReference type="RefSeq" id="NP_796097.2">
    <molecule id="Q8C9J3-2"/>
    <property type="nucleotide sequence ID" value="NM_177123.4"/>
</dbReference>
<dbReference type="SMR" id="Q8C9J3"/>
<dbReference type="BioGRID" id="235900">
    <property type="interactions" value="6"/>
</dbReference>
<dbReference type="FunCoup" id="Q8C9J3">
    <property type="interactions" value="211"/>
</dbReference>
<dbReference type="IntAct" id="Q8C9J3">
    <property type="interactions" value="1"/>
</dbReference>
<dbReference type="STRING" id="10090.ENSMUSP00000035762"/>
<dbReference type="GlyGen" id="Q8C9J3">
    <property type="glycosylation" value="1 site"/>
</dbReference>
<dbReference type="iPTMnet" id="Q8C9J3"/>
<dbReference type="PhosphoSitePlus" id="Q8C9J3"/>
<dbReference type="jPOST" id="Q8C9J3"/>
<dbReference type="PaxDb" id="10090-ENSMUSP00000035762"/>
<dbReference type="ProteomicsDB" id="257344">
    <molecule id="Q8C9J3-1"/>
</dbReference>
<dbReference type="ProteomicsDB" id="257345">
    <molecule id="Q8C9J3-2"/>
</dbReference>
<dbReference type="ProteomicsDB" id="257346">
    <molecule id="Q8C9J3-3"/>
</dbReference>
<dbReference type="ProteomicsDB" id="310131"/>
<dbReference type="Antibodypedia" id="22874">
    <property type="antibodies" value="49 antibodies from 11 providers"/>
</dbReference>
<dbReference type="Ensembl" id="ENSMUST00000041840.14">
    <molecule id="Q8C9J3-2"/>
    <property type="protein sequence ID" value="ENSMUSP00000035762.8"/>
    <property type="gene ID" value="ENSMUSG00000072663.13"/>
</dbReference>
<dbReference type="Ensembl" id="ENSMUST00000159368.2">
    <molecule id="Q8C9J3-3"/>
    <property type="protein sequence ID" value="ENSMUSP00000124723.2"/>
    <property type="gene ID" value="ENSMUSG00000072663.13"/>
</dbReference>
<dbReference type="Ensembl" id="ENSMUST00000160236.8">
    <molecule id="Q8C9J3-1"/>
    <property type="protein sequence ID" value="ENSMUSP00000124222.2"/>
    <property type="gene ID" value="ENSMUSG00000072663.13"/>
</dbReference>
<dbReference type="GeneID" id="320277"/>
<dbReference type="KEGG" id="mmu:320277"/>
<dbReference type="UCSC" id="uc007vfq.2">
    <molecule id="Q8C9J3-2"/>
    <property type="organism name" value="mouse"/>
</dbReference>
<dbReference type="UCSC" id="uc007vfr.2">
    <molecule id="Q8C9J3-3"/>
    <property type="organism name" value="mouse"/>
</dbReference>
<dbReference type="AGR" id="MGI:2443727"/>
<dbReference type="CTD" id="79925"/>
<dbReference type="MGI" id="MGI:2443727">
    <property type="gene designation" value="Spef2"/>
</dbReference>
<dbReference type="VEuPathDB" id="HostDB:ENSMUSG00000072663"/>
<dbReference type="eggNOG" id="ENOG502QR7Y">
    <property type="taxonomic scope" value="Eukaryota"/>
</dbReference>
<dbReference type="GeneTree" id="ENSGT00390000008160"/>
<dbReference type="HOGENOM" id="CLU_002424_1_0_1"/>
<dbReference type="InParanoid" id="Q8C9J3"/>
<dbReference type="OMA" id="IMETKQQ"/>
<dbReference type="OrthoDB" id="66422at9989"/>
<dbReference type="PhylomeDB" id="Q8C9J3"/>
<dbReference type="TreeFam" id="TF329522"/>
<dbReference type="BioGRID-ORCS" id="320277">
    <property type="hits" value="3 hits in 61 CRISPR screens"/>
</dbReference>
<dbReference type="ChiTaRS" id="Spef2">
    <property type="organism name" value="mouse"/>
</dbReference>
<dbReference type="PRO" id="PR:Q8C9J3"/>
<dbReference type="Proteomes" id="UP000000589">
    <property type="component" value="Chromosome 15"/>
</dbReference>
<dbReference type="RNAct" id="Q8C9J3">
    <property type="molecule type" value="protein"/>
</dbReference>
<dbReference type="Bgee" id="ENSMUSG00000072663">
    <property type="expression patterns" value="Expressed in olfactory epithelium and 38 other cell types or tissues"/>
</dbReference>
<dbReference type="ExpressionAtlas" id="Q8C9J3">
    <property type="expression patterns" value="baseline and differential"/>
</dbReference>
<dbReference type="GO" id="GO:0005737">
    <property type="term" value="C:cytoplasm"/>
    <property type="evidence" value="ECO:0000314"/>
    <property type="project" value="MGI"/>
</dbReference>
<dbReference type="GO" id="GO:0005576">
    <property type="term" value="C:extracellular region"/>
    <property type="evidence" value="ECO:0007669"/>
    <property type="project" value="GOC"/>
</dbReference>
<dbReference type="GO" id="GO:0005794">
    <property type="term" value="C:Golgi apparatus"/>
    <property type="evidence" value="ECO:0000314"/>
    <property type="project" value="MGI"/>
</dbReference>
<dbReference type="GO" id="GO:0002177">
    <property type="term" value="C:manchette"/>
    <property type="evidence" value="ECO:0000314"/>
    <property type="project" value="MGI"/>
</dbReference>
<dbReference type="GO" id="GO:0036126">
    <property type="term" value="C:sperm flagellum"/>
    <property type="evidence" value="ECO:0000250"/>
    <property type="project" value="UniProtKB"/>
</dbReference>
<dbReference type="GO" id="GO:0097225">
    <property type="term" value="C:sperm midpiece"/>
    <property type="evidence" value="ECO:0000314"/>
    <property type="project" value="MGI"/>
</dbReference>
<dbReference type="GO" id="GO:0048854">
    <property type="term" value="P:brain morphogenesis"/>
    <property type="evidence" value="ECO:0000315"/>
    <property type="project" value="MGI"/>
</dbReference>
<dbReference type="GO" id="GO:0090660">
    <property type="term" value="P:cerebrospinal fluid circulation"/>
    <property type="evidence" value="ECO:0000316"/>
    <property type="project" value="MGI"/>
</dbReference>
<dbReference type="GO" id="GO:0003351">
    <property type="term" value="P:epithelial cilium movement involved in extracellular fluid movement"/>
    <property type="evidence" value="ECO:0000315"/>
    <property type="project" value="MGI"/>
</dbReference>
<dbReference type="GO" id="GO:0051649">
    <property type="term" value="P:establishment of localization in cell"/>
    <property type="evidence" value="ECO:0000316"/>
    <property type="project" value="MGI"/>
</dbReference>
<dbReference type="GO" id="GO:0120197">
    <property type="term" value="P:mucociliary clearance"/>
    <property type="evidence" value="ECO:0000315"/>
    <property type="project" value="MGI"/>
</dbReference>
<dbReference type="GO" id="GO:0060541">
    <property type="term" value="P:respiratory system development"/>
    <property type="evidence" value="ECO:0000315"/>
    <property type="project" value="MGI"/>
</dbReference>
<dbReference type="GO" id="GO:0048705">
    <property type="term" value="P:skeletal system morphogenesis"/>
    <property type="evidence" value="ECO:0000315"/>
    <property type="project" value="MGI"/>
</dbReference>
<dbReference type="GO" id="GO:0007288">
    <property type="term" value="P:sperm axoneme assembly"/>
    <property type="evidence" value="ECO:0000315"/>
    <property type="project" value="MGI"/>
</dbReference>
<dbReference type="GO" id="GO:0120316">
    <property type="term" value="P:sperm flagellum assembly"/>
    <property type="evidence" value="ECO:0000316"/>
    <property type="project" value="MGI"/>
</dbReference>
<dbReference type="GO" id="GO:0007283">
    <property type="term" value="P:spermatogenesis"/>
    <property type="evidence" value="ECO:0000315"/>
    <property type="project" value="MGI"/>
</dbReference>
<dbReference type="Gene3D" id="1.10.418.10">
    <property type="entry name" value="Calponin-like domain"/>
    <property type="match status" value="1"/>
</dbReference>
<dbReference type="Gene3D" id="3.40.50.300">
    <property type="entry name" value="P-loop containing nucleotide triphosphate hydrolases"/>
    <property type="match status" value="1"/>
</dbReference>
<dbReference type="InterPro" id="IPR010441">
    <property type="entry name" value="CH_2"/>
</dbReference>
<dbReference type="InterPro" id="IPR001715">
    <property type="entry name" value="CH_dom"/>
</dbReference>
<dbReference type="InterPro" id="IPR036872">
    <property type="entry name" value="CH_dom_sf"/>
</dbReference>
<dbReference type="InterPro" id="IPR011992">
    <property type="entry name" value="EF-hand-dom_pair"/>
</dbReference>
<dbReference type="InterPro" id="IPR027417">
    <property type="entry name" value="P-loop_NTPase"/>
</dbReference>
<dbReference type="InterPro" id="IPR056199">
    <property type="entry name" value="SPEF2_C"/>
</dbReference>
<dbReference type="InterPro" id="IPR054517">
    <property type="entry name" value="SPEF2_D5"/>
</dbReference>
<dbReference type="InterPro" id="IPR052634">
    <property type="entry name" value="Sperm_flagellar-bone_growth"/>
</dbReference>
<dbReference type="PANTHER" id="PTHR14919">
    <property type="entry name" value="KPL2-RELATED"/>
    <property type="match status" value="1"/>
</dbReference>
<dbReference type="PANTHER" id="PTHR14919:SF0">
    <property type="entry name" value="SPERM FLAGELLAR PROTEIN 2"/>
    <property type="match status" value="1"/>
</dbReference>
<dbReference type="Pfam" id="PF00406">
    <property type="entry name" value="ADK"/>
    <property type="match status" value="1"/>
</dbReference>
<dbReference type="Pfam" id="PF06294">
    <property type="entry name" value="CH_2"/>
    <property type="match status" value="1"/>
</dbReference>
<dbReference type="Pfam" id="PF24082">
    <property type="entry name" value="SPEF2_C"/>
    <property type="match status" value="1"/>
</dbReference>
<dbReference type="Pfam" id="PF22946">
    <property type="entry name" value="SPEF2_D5"/>
    <property type="match status" value="1"/>
</dbReference>
<dbReference type="SUPFAM" id="SSF47473">
    <property type="entry name" value="EF-hand"/>
    <property type="match status" value="1"/>
</dbReference>
<dbReference type="SUPFAM" id="SSF52540">
    <property type="entry name" value="P-loop containing nucleoside triphosphate hydrolases"/>
    <property type="match status" value="1"/>
</dbReference>
<dbReference type="PROSITE" id="PS50021">
    <property type="entry name" value="CH"/>
    <property type="match status" value="1"/>
</dbReference>
<reference key="1">
    <citation type="journal article" date="2011" name="Biol. Reprod.">
        <title>Loss of SPEF2 function in mice results in spermatogenesis defects and primary ciliary dyskinesia.</title>
        <authorList>
            <person name="Sironen A."/>
            <person name="Kotaja N."/>
            <person name="Mulhern H."/>
            <person name="Wyatt T.A."/>
            <person name="Sisson J.H."/>
            <person name="Pavlik J.A."/>
            <person name="Miiluniemi M."/>
            <person name="Fleming M.D."/>
            <person name="Lee L."/>
        </authorList>
    </citation>
    <scope>NUCLEOTIDE SEQUENCE [MRNA] (ISOFORM 4)</scope>
    <scope>FUNCTION</scope>
    <source>
        <strain evidence="12">C57BL/6J</strain>
        <tissue evidence="12">Testis</tissue>
    </source>
</reference>
<reference key="2">
    <citation type="journal article" date="2005" name="Science">
        <title>The transcriptional landscape of the mammalian genome.</title>
        <authorList>
            <person name="Carninci P."/>
            <person name="Kasukawa T."/>
            <person name="Katayama S."/>
            <person name="Gough J."/>
            <person name="Frith M.C."/>
            <person name="Maeda N."/>
            <person name="Oyama R."/>
            <person name="Ravasi T."/>
            <person name="Lenhard B."/>
            <person name="Wells C."/>
            <person name="Kodzius R."/>
            <person name="Shimokawa K."/>
            <person name="Bajic V.B."/>
            <person name="Brenner S.E."/>
            <person name="Batalov S."/>
            <person name="Forrest A.R."/>
            <person name="Zavolan M."/>
            <person name="Davis M.J."/>
            <person name="Wilming L.G."/>
            <person name="Aidinis V."/>
            <person name="Allen J.E."/>
            <person name="Ambesi-Impiombato A."/>
            <person name="Apweiler R."/>
            <person name="Aturaliya R.N."/>
            <person name="Bailey T.L."/>
            <person name="Bansal M."/>
            <person name="Baxter L."/>
            <person name="Beisel K.W."/>
            <person name="Bersano T."/>
            <person name="Bono H."/>
            <person name="Chalk A.M."/>
            <person name="Chiu K.P."/>
            <person name="Choudhary V."/>
            <person name="Christoffels A."/>
            <person name="Clutterbuck D.R."/>
            <person name="Crowe M.L."/>
            <person name="Dalla E."/>
            <person name="Dalrymple B.P."/>
            <person name="de Bono B."/>
            <person name="Della Gatta G."/>
            <person name="di Bernardo D."/>
            <person name="Down T."/>
            <person name="Engstrom P."/>
            <person name="Fagiolini M."/>
            <person name="Faulkner G."/>
            <person name="Fletcher C.F."/>
            <person name="Fukushima T."/>
            <person name="Furuno M."/>
            <person name="Futaki S."/>
            <person name="Gariboldi M."/>
            <person name="Georgii-Hemming P."/>
            <person name="Gingeras T.R."/>
            <person name="Gojobori T."/>
            <person name="Green R.E."/>
            <person name="Gustincich S."/>
            <person name="Harbers M."/>
            <person name="Hayashi Y."/>
            <person name="Hensch T.K."/>
            <person name="Hirokawa N."/>
            <person name="Hill D."/>
            <person name="Huminiecki L."/>
            <person name="Iacono M."/>
            <person name="Ikeo K."/>
            <person name="Iwama A."/>
            <person name="Ishikawa T."/>
            <person name="Jakt M."/>
            <person name="Kanapin A."/>
            <person name="Katoh M."/>
            <person name="Kawasawa Y."/>
            <person name="Kelso J."/>
            <person name="Kitamura H."/>
            <person name="Kitano H."/>
            <person name="Kollias G."/>
            <person name="Krishnan S.P."/>
            <person name="Kruger A."/>
            <person name="Kummerfeld S.K."/>
            <person name="Kurochkin I.V."/>
            <person name="Lareau L.F."/>
            <person name="Lazarevic D."/>
            <person name="Lipovich L."/>
            <person name="Liu J."/>
            <person name="Liuni S."/>
            <person name="McWilliam S."/>
            <person name="Madan Babu M."/>
            <person name="Madera M."/>
            <person name="Marchionni L."/>
            <person name="Matsuda H."/>
            <person name="Matsuzawa S."/>
            <person name="Miki H."/>
            <person name="Mignone F."/>
            <person name="Miyake S."/>
            <person name="Morris K."/>
            <person name="Mottagui-Tabar S."/>
            <person name="Mulder N."/>
            <person name="Nakano N."/>
            <person name="Nakauchi H."/>
            <person name="Ng P."/>
            <person name="Nilsson R."/>
            <person name="Nishiguchi S."/>
            <person name="Nishikawa S."/>
            <person name="Nori F."/>
            <person name="Ohara O."/>
            <person name="Okazaki Y."/>
            <person name="Orlando V."/>
            <person name="Pang K.C."/>
            <person name="Pavan W.J."/>
            <person name="Pavesi G."/>
            <person name="Pesole G."/>
            <person name="Petrovsky N."/>
            <person name="Piazza S."/>
            <person name="Reed J."/>
            <person name="Reid J.F."/>
            <person name="Ring B.Z."/>
            <person name="Ringwald M."/>
            <person name="Rost B."/>
            <person name="Ruan Y."/>
            <person name="Salzberg S.L."/>
            <person name="Sandelin A."/>
            <person name="Schneider C."/>
            <person name="Schoenbach C."/>
            <person name="Sekiguchi K."/>
            <person name="Semple C.A."/>
            <person name="Seno S."/>
            <person name="Sessa L."/>
            <person name="Sheng Y."/>
            <person name="Shibata Y."/>
            <person name="Shimada H."/>
            <person name="Shimada K."/>
            <person name="Silva D."/>
            <person name="Sinclair B."/>
            <person name="Sperling S."/>
            <person name="Stupka E."/>
            <person name="Sugiura K."/>
            <person name="Sultana R."/>
            <person name="Takenaka Y."/>
            <person name="Taki K."/>
            <person name="Tammoja K."/>
            <person name="Tan S.L."/>
            <person name="Tang S."/>
            <person name="Taylor M.S."/>
            <person name="Tegner J."/>
            <person name="Teichmann S.A."/>
            <person name="Ueda H.R."/>
            <person name="van Nimwegen E."/>
            <person name="Verardo R."/>
            <person name="Wei C.L."/>
            <person name="Yagi K."/>
            <person name="Yamanishi H."/>
            <person name="Zabarovsky E."/>
            <person name="Zhu S."/>
            <person name="Zimmer A."/>
            <person name="Hide W."/>
            <person name="Bult C."/>
            <person name="Grimmond S.M."/>
            <person name="Teasdale R.D."/>
            <person name="Liu E.T."/>
            <person name="Brusic V."/>
            <person name="Quackenbush J."/>
            <person name="Wahlestedt C."/>
            <person name="Mattick J.S."/>
            <person name="Hume D.A."/>
            <person name="Kai C."/>
            <person name="Sasaki D."/>
            <person name="Tomaru Y."/>
            <person name="Fukuda S."/>
            <person name="Kanamori-Katayama M."/>
            <person name="Suzuki M."/>
            <person name="Aoki J."/>
            <person name="Arakawa T."/>
            <person name="Iida J."/>
            <person name="Imamura K."/>
            <person name="Itoh M."/>
            <person name="Kato T."/>
            <person name="Kawaji H."/>
            <person name="Kawagashira N."/>
            <person name="Kawashima T."/>
            <person name="Kojima M."/>
            <person name="Kondo S."/>
            <person name="Konno H."/>
            <person name="Nakano K."/>
            <person name="Ninomiya N."/>
            <person name="Nishio T."/>
            <person name="Okada M."/>
            <person name="Plessy C."/>
            <person name="Shibata K."/>
            <person name="Shiraki T."/>
            <person name="Suzuki S."/>
            <person name="Tagami M."/>
            <person name="Waki K."/>
            <person name="Watahiki A."/>
            <person name="Okamura-Oho Y."/>
            <person name="Suzuki H."/>
            <person name="Kawai J."/>
            <person name="Hayashizaki Y."/>
        </authorList>
    </citation>
    <scope>NUCLEOTIDE SEQUENCE [LARGE SCALE MRNA] (ISOFORM 3)</scope>
    <source>
        <strain>C57BL/6J</strain>
        <tissue>Thymus</tissue>
    </source>
</reference>
<reference key="3">
    <citation type="journal article" date="2009" name="PLoS Biol.">
        <title>Lineage-specific biology revealed by a finished genome assembly of the mouse.</title>
        <authorList>
            <person name="Church D.M."/>
            <person name="Goodstadt L."/>
            <person name="Hillier L.W."/>
            <person name="Zody M.C."/>
            <person name="Goldstein S."/>
            <person name="She X."/>
            <person name="Bult C.J."/>
            <person name="Agarwala R."/>
            <person name="Cherry J.L."/>
            <person name="DiCuccio M."/>
            <person name="Hlavina W."/>
            <person name="Kapustin Y."/>
            <person name="Meric P."/>
            <person name="Maglott D."/>
            <person name="Birtle Z."/>
            <person name="Marques A.C."/>
            <person name="Graves T."/>
            <person name="Zhou S."/>
            <person name="Teague B."/>
            <person name="Potamousis K."/>
            <person name="Churas C."/>
            <person name="Place M."/>
            <person name="Herschleb J."/>
            <person name="Runnheim R."/>
            <person name="Forrest D."/>
            <person name="Amos-Landgraf J."/>
            <person name="Schwartz D.C."/>
            <person name="Cheng Z."/>
            <person name="Lindblad-Toh K."/>
            <person name="Eichler E.E."/>
            <person name="Ponting C.P."/>
        </authorList>
    </citation>
    <scope>NUCLEOTIDE SEQUENCE [LARGE SCALE GENOMIC DNA]</scope>
    <source>
        <strain>C57BL/6J</strain>
    </source>
</reference>
<reference key="4">
    <citation type="journal article" date="2004" name="Genome Res.">
        <title>The status, quality, and expansion of the NIH full-length cDNA project: the Mammalian Gene Collection (MGC).</title>
        <authorList>
            <consortium name="The MGC Project Team"/>
        </authorList>
    </citation>
    <scope>NUCLEOTIDE SEQUENCE [LARGE SCALE MRNA] (ISOFORM 2)</scope>
    <source>
        <tissue>Brain</tissue>
    </source>
</reference>
<reference key="5">
    <citation type="journal article" date="2010" name="Biol. Reprod.">
        <title>Expression of SPEF2 during mouse spermatogenesis and identification of IFT20 as an interacting protein.</title>
        <authorList>
            <person name="Sironen A."/>
            <person name="Hansen J."/>
            <person name="Thomsen B."/>
            <person name="Andersson M."/>
            <person name="Vilkki J."/>
            <person name="Toppari J."/>
            <person name="Kotaja N."/>
        </authorList>
    </citation>
    <scope>INTERACTION WITH IFT20</scope>
    <scope>SUBCELLULAR LOCATION</scope>
    <scope>TISSUE SPECIFICITY</scope>
    <scope>DEVELOPMENTAL STAGE</scope>
    <scope>ALTERNATIVE SPLICING</scope>
</reference>
<reference key="6">
    <citation type="journal article" date="2017" name="Development">
        <title>SPEF2 functions in microtubule-mediated transport in elongating spermatids to ensure proper male germ cell differentiation.</title>
        <authorList>
            <person name="Lehti M.S."/>
            <person name="Zhang F.P."/>
            <person name="Kotaja N."/>
            <person name="Sironen A."/>
        </authorList>
    </citation>
    <scope>FUNCTION</scope>
    <scope>INTERACTION WITH DYNC1I2</scope>
    <scope>SUBCELLULAR LOCATION</scope>
</reference>
<reference key="7">
    <citation type="journal article" date="2018" name="Sci. Rep.">
        <title>Cilia-related protein SPEF2 regulates osteoblast differentiation.</title>
        <authorList>
            <person name="Lehti M.S."/>
            <person name="Henriksson H."/>
            <person name="Rummukainen P."/>
            <person name="Wang F."/>
            <person name="Uusitalo-Kylmaelae L."/>
            <person name="Kiviranta R."/>
            <person name="Heino T.J."/>
            <person name="Kotaja N."/>
            <person name="Sironen A."/>
        </authorList>
    </citation>
    <scope>FUNCTION</scope>
    <scope>TISSUE SPECIFICITY</scope>
    <scope>DISRUPTION PHENOTYPE</scope>
</reference>
<evidence type="ECO:0000250" key="1">
    <source>
        <dbReference type="UniProtKB" id="Q9C093"/>
    </source>
</evidence>
<evidence type="ECO:0000255" key="2"/>
<evidence type="ECO:0000255" key="3">
    <source>
        <dbReference type="PROSITE-ProRule" id="PRU00044"/>
    </source>
</evidence>
<evidence type="ECO:0000256" key="4">
    <source>
        <dbReference type="SAM" id="MobiDB-lite"/>
    </source>
</evidence>
<evidence type="ECO:0000269" key="5">
    <source>
    </source>
</evidence>
<evidence type="ECO:0000269" key="6">
    <source>
    </source>
</evidence>
<evidence type="ECO:0000269" key="7">
    <source>
    </source>
</evidence>
<evidence type="ECO:0000269" key="8">
    <source>
    </source>
</evidence>
<evidence type="ECO:0000303" key="9">
    <source>
    </source>
</evidence>
<evidence type="ECO:0000303" key="10">
    <source>
    </source>
</evidence>
<evidence type="ECO:0000305" key="11"/>
<evidence type="ECO:0000312" key="12">
    <source>
        <dbReference type="EMBL" id="AEA11026.1"/>
    </source>
</evidence>
<sequence length="1724" mass="197972">MSEILCQWLNQELRVSRTVSPKSFAKAFSNGYLIGEVLFKFELQSDFAEFSESRGSTAKLNNFSRLQPTLHLLGLQFDQNVAQSIITEKPGAATKLLYQLYIALQKKKKTGLTGLEIQTMQPQTNLRLQTLKSEAFREQRLNRRRQNEIMAKIQAAIIQIPKPESNRTLKAIEAQKLMKKKKEAEDVANEIKKFEALIKKDLQIKESVSKTSLETTDQTTAELLNTYSDDDYIKKIQKRLEEDAFAREQREKRRRRLLMDQLMAHEAQEEAYREEQLIHRLMRQSQQERRIAVQLMHVRHEKEVLWQNRIFREKQFEERRLKDFQDALDREAALAKQAKIDFAEQTLREKEIHEKISVERAQQRYKKHYGICAEILDQMLDLCTKVADYRLLTNNLIPHKMMHDWKELFFSGIPIYEQTSLTHGQTEPTEDHRAEVKKRNLLDSKDYEDYKNMVGEWALPEDMVNSSPPSNNSILGHVLLRLIEKADPSASNAEATELPSLAVKGCILGKTLSGKTTVLKSLQNDFPVHVLSIDTLVQEAIQAFHERQKSGKTPPTQEDDKRDPVVNQEKVSKTQDKNVLAVSPVPGDRTSQKEGVKINEFEQFRSSDSFLSLSMRAQLGAKSELMLRRGKSIPDILLVSILVNAIKEIPVDQSWVLDGFPITLNQAKLLEEALTGYKRKFLQLKKKKEQMPTLALDPSTSTEVSLLPSALDFVILLDISDNSSLARTNDIIAKEISHEISHENVGRPGTGTSQDNKSEDRNLRDHIQHRIVGFLDNWPLLEEWFTQPKNILTKVNAEIDEALLCQKVKEIFATETVNKKIKVEKTLEEKETEKKAGAPPAEPPAMSPPLSSEAEKDKELHQAKTPGKGKTQSVSPKGKAQGGKVSVKKSPVGSAEVSPTPTAPPPPKAGTEEWVYVNEPIPEELPSFLVPYWELIEKSYINHIKTVLRHLRERQHNVLSYLYETRTSFQEFLRRPDHKQDFVSQWQADFNSVPEDLWEDEETKAELHQRVNDLRDRLWDICEARKEEAEQERLDIINESWLQDSIGITMNHFFSLMQAEVNRFQDTKRLLQDYYRAMESKIPLEDSKKFTRVPLVQLDGKEISESQLRIPLVPRISNSPENSAVKPKVGTFLKGRSDPPLEVLEANFEIDEKILLDTWQQASLAISNMVAAEVHQRLTEEEKEPPQLDSKEKSPQSGANKKAKKEKEAPKKKKTDKKGKGKSSPVAEVSPVTVTPEEMAEMEKRNELRLRIKEEHLAALQTEEQAAQFRLELIKLKALSVLEDLVTKVIDVYRLMEKWLGKRYLNEMASIQKLTELARYHIETATKIQNEIYLSQEDFYINGDIKVFPDPSPPTRPPPVEREENGTLTIEQLDNLRDQFLDMAPKGIIGNKAFSDILLDLITLNLGTNNFPSSWMHLSQLDLQEITSLLTVNTEFVDWRKFLMVTAMPWPMALEDELLDTLQRFKALDEAQTGTITYEQYKQAGLWFSGDEDIKIPENPLEPLPFNRQEHLIEFFFRLFADCEKEPPQLDYTQMLLYFACHPDTLEGVYRALSVAVGTHIFRQVETPMLMAEKTSISTVSPIEEFPETEESSAKEDRELKEEKDDQKEEEIPENANTEKISMETLLKVFGGGNEVLDANRFASYLKSENIYAENFIKTFQDLGARNLEPIAVNILLKHPYIQDLIANYVDYKFPDIKMILQRSEHAQGSDGERSPSRLTDEKK</sequence>
<comment type="function">
    <text evidence="6 7">Required for correct axoneme development in spermatozoa (PubMed:21715716, PubMed:28619825). Important for normal development of the manchette and sperm head morphology (PubMed:28619825). Essential for male fertility (PubMed:21715716, PubMed:28619825). Plays a role in localization of the intraflagellar transport protein IFT20 to the manchette, suggesting function as an adapter for dynein-mediated protein transport during spermatogenesis. Also plays a role in bone growth where it seems to be required for normal osteoblast differentiation (PubMed:28619825).</text>
</comment>
<comment type="subunit">
    <text evidence="5 7">Interacts (via C-terminus) with IFT20 (PubMed:19889948). Interacts with DYNC1I2 (PubMed:28619825).</text>
</comment>
<comment type="subcellular location">
    <subcellularLocation>
        <location evidence="1">Cell projection</location>
        <location evidence="1">Cilium</location>
        <location evidence="1">Flagellum</location>
    </subcellularLocation>
    <subcellularLocation>
        <location evidence="5">Cytoplasm</location>
    </subcellularLocation>
    <subcellularLocation>
        <location evidence="5 7">Cytoplasm</location>
        <location evidence="5 7">Cytoskeleton</location>
    </subcellularLocation>
    <subcellularLocation>
        <location evidence="5">Golgi apparatus</location>
    </subcellularLocation>
    <text evidence="5 7">Shows dynamic localization in developing spermatozoa (PubMed:19889948). Localizes to the manchette in step 10-12 elongating spermatids, where it is mainly found on the basal side below the perinuclear ring (PubMed:19889948, PubMed:28619825). Detected in the basal body and neck area of step 13-14 spermatids (PubMed:19889948). Localizes to the midpiece of the sperm tail in step 15-16 spermatids (PubMed:19889948). During the epididymal transport of spermatozoa, expression in the sperm tail reduces and becomes concentrated at the distal part of the midpiece (PubMed:19889948). Detected in the Golgi apparatus of late spermatocytes and round spermatids (PubMed:19889948). Detected in the cytoplasm of Sertoli cells (PubMed:19889948).</text>
</comment>
<comment type="alternative products">
    <event type="alternative splicing"/>
    <isoform>
        <id>Q8C9J3-1</id>
        <name>1</name>
        <sequence type="displayed"/>
    </isoform>
    <isoform>
        <id>Q8C9J3-2</id>
        <name>2</name>
        <sequence type="described" ref="VSP_027528 VSP_027529"/>
    </isoform>
    <isoform>
        <id>Q8C9J3-3</id>
        <name>3</name>
        <sequence type="described" ref="VSP_027526 VSP_027527"/>
    </isoform>
    <isoform>
        <id>Q8C9J3-4</id>
        <name>4</name>
        <sequence type="described" ref="VSP_059848 VSP_059849"/>
    </isoform>
    <text evidence="5">A number of isoforms are produced.</text>
</comment>
<comment type="tissue specificity">
    <text evidence="5 8">Highly expressed in testis, where it primarily localizes to late spermatocytes, round spermatids and elongating spermatids (at protein level) (PubMed:19889948, PubMed:29339787). Found in Sertoli cells of the testis (at protein level) (PubMed:19889948). Expressed at lower levels in epididymis (at protein level) (PubMed:19889948, PubMed:29339787). Detected in lung, brain, liver and kidney (PubMed:19889948, PubMed:29339787). Also detected in bone, cartilage, trachea, pituitary gland and eye (PubMed:29339787). Expressed in osteoblasts and chondrocytes (PubMed:29339787).</text>
</comment>
<comment type="developmental stage">
    <text evidence="5">Shows increasing expression levels in testis during postnatal stages, reaching highest levels by postnatal day 50. In testis, first detected in pachytene spermatocytes (stage VII), reaching peak expression in meitotically dividing spermatocytes (stage XII).</text>
</comment>
<comment type="disruption phenotype">
    <text evidence="8">Lethality occurs at approximately 3 weeks of age, accompanied by severe hydrocephaly. Weight at birth is similar to wild type but subsequently there is significant growth retardation. Bone mineralization is reduced in the vertebral column and hindlimbs, associated with decreased bone strength. Bone length and skull thickness is also slightly reduced. Trabecular bone density is reduced, along with reduced trabecular number and increased open porosity. Expression of the osteoblast marker genes RUNX2, BGLAP/OCN and COL1A1/COL1 is reduced in bone tissue. Expression of SP7/OSX and ALPL is also reduced in cultured calvarial osteoblasts. Osteoclast differentiation does not appear to be affected. No obvious effects on cilia length or axonemal structure.</text>
</comment>
<feature type="chain" id="PRO_0000299030" description="Sperm flagellar protein 2">
    <location>
        <begin position="1"/>
        <end position="1724"/>
    </location>
</feature>
<feature type="domain" description="Calponin-homology (CH)" evidence="3">
    <location>
        <begin position="1"/>
        <end position="105"/>
    </location>
</feature>
<feature type="region of interest" description="Disordered" evidence="4">
    <location>
        <begin position="545"/>
        <end position="576"/>
    </location>
</feature>
<feature type="region of interest" description="Disordered" evidence="4">
    <location>
        <begin position="828"/>
        <end position="910"/>
    </location>
</feature>
<feature type="region of interest" description="Disordered" evidence="4">
    <location>
        <begin position="1177"/>
        <end position="1241"/>
    </location>
</feature>
<feature type="region of interest" description="Interaction with IFT20" evidence="1">
    <location>
        <begin position="1228"/>
        <end position="1580"/>
    </location>
</feature>
<feature type="region of interest" description="Disordered" evidence="4">
    <location>
        <begin position="1580"/>
        <end position="1618"/>
    </location>
</feature>
<feature type="region of interest" description="Disordered" evidence="4">
    <location>
        <begin position="1704"/>
        <end position="1724"/>
    </location>
</feature>
<feature type="coiled-coil region" evidence="2">
    <location>
        <begin position="170"/>
        <end position="203"/>
    </location>
</feature>
<feature type="coiled-coil region" evidence="2">
    <location>
        <begin position="255"/>
        <end position="351"/>
    </location>
</feature>
<feature type="coiled-coil region" evidence="2">
    <location>
        <begin position="665"/>
        <end position="691"/>
    </location>
</feature>
<feature type="coiled-coil region" evidence="2">
    <location>
        <begin position="995"/>
        <end position="1021"/>
    </location>
</feature>
<feature type="compositionally biased region" description="Basic and acidic residues" evidence="4">
    <location>
        <begin position="558"/>
        <end position="576"/>
    </location>
</feature>
<feature type="compositionally biased region" description="Basic and acidic residues" evidence="4">
    <location>
        <begin position="853"/>
        <end position="862"/>
    </location>
</feature>
<feature type="compositionally biased region" description="Basic and acidic residues" evidence="4">
    <location>
        <begin position="1177"/>
        <end position="1194"/>
    </location>
</feature>
<feature type="compositionally biased region" description="Basic residues" evidence="4">
    <location>
        <begin position="1210"/>
        <end position="1221"/>
    </location>
</feature>
<feature type="compositionally biased region" description="Basic and acidic residues" evidence="4">
    <location>
        <begin position="1592"/>
        <end position="1607"/>
    </location>
</feature>
<feature type="splice variant" id="VSP_059848" description="In isoform 4.">
    <original>E</original>
    <variation>ERLKNLIPRQTDFNLMRVTCRFQEKCKQMKEDLARMNFEKFEKIQKLEEEQRHFNIEK</variation>
    <location>
        <position position="138"/>
    </location>
</feature>
<feature type="splice variant" id="VSP_027526" description="In isoform 3." evidence="10">
    <original>NMVGE</original>
    <variation>VHTNM</variation>
    <location>
        <begin position="452"/>
        <end position="456"/>
    </location>
</feature>
<feature type="splice variant" id="VSP_027527" description="In isoform 3." evidence="10">
    <location>
        <begin position="457"/>
        <end position="1724"/>
    </location>
</feature>
<feature type="splice variant" id="VSP_027528" description="In isoform 2." evidence="9">
    <original>SVS</original>
    <variation>SGD</variation>
    <location>
        <begin position="873"/>
        <end position="875"/>
    </location>
</feature>
<feature type="splice variant" id="VSP_059849" description="In isoform 4.">
    <original>S</original>
    <variation>SETQHGKQESQPEGKGKK</variation>
    <location>
        <position position="873"/>
    </location>
</feature>
<feature type="splice variant" id="VSP_027529" description="In isoform 2." evidence="9">
    <location>
        <begin position="876"/>
        <end position="1724"/>
    </location>
</feature>
<feature type="sequence conflict" description="In Ref. 1; AEA11026." evidence="11" ref="1">
    <original>A</original>
    <variation>T</variation>
    <location>
        <position position="1146"/>
    </location>
</feature>
<protein>
    <recommendedName>
        <fullName>Sperm flagellar protein 2</fullName>
    </recommendedName>
    <alternativeName>
        <fullName>Protein KPL2</fullName>
    </alternativeName>
</protein>
<proteinExistence type="evidence at protein level"/>
<keyword id="KW-0025">Alternative splicing</keyword>
<keyword id="KW-0966">Cell projection</keyword>
<keyword id="KW-0969">Cilium</keyword>
<keyword id="KW-0175">Coiled coil</keyword>
<keyword id="KW-0963">Cytoplasm</keyword>
<keyword id="KW-0206">Cytoskeleton</keyword>
<keyword id="KW-0221">Differentiation</keyword>
<keyword id="KW-0282">Flagellum</keyword>
<keyword id="KW-0333">Golgi apparatus</keyword>
<keyword id="KW-1185">Reference proteome</keyword>
<keyword id="KW-0744">Spermatogenesis</keyword>
<organism>
    <name type="scientific">Mus musculus</name>
    <name type="common">Mouse</name>
    <dbReference type="NCBI Taxonomy" id="10090"/>
    <lineage>
        <taxon>Eukaryota</taxon>
        <taxon>Metazoa</taxon>
        <taxon>Chordata</taxon>
        <taxon>Craniata</taxon>
        <taxon>Vertebrata</taxon>
        <taxon>Euteleostomi</taxon>
        <taxon>Mammalia</taxon>
        <taxon>Eutheria</taxon>
        <taxon>Euarchontoglires</taxon>
        <taxon>Glires</taxon>
        <taxon>Rodentia</taxon>
        <taxon>Myomorpha</taxon>
        <taxon>Muroidea</taxon>
        <taxon>Muridae</taxon>
        <taxon>Murinae</taxon>
        <taxon>Mus</taxon>
        <taxon>Mus</taxon>
    </lineage>
</organism>
<accession>Q8C9J3</accession>
<accession>A2RSG5</accession>
<accession>E0CYG3</accession>
<accession>G0Z098</accession>